<keyword id="KW-0002">3D-structure</keyword>
<keyword id="KW-1064">Adaptive immunity</keyword>
<keyword id="KW-1003">Cell membrane</keyword>
<keyword id="KW-0903">Direct protein sequencing</keyword>
<keyword id="KW-1015">Disulfide bond</keyword>
<keyword id="KW-0325">Glycoprotein</keyword>
<keyword id="KW-0391">Immunity</keyword>
<keyword id="KW-1280">Immunoglobulin</keyword>
<keyword id="KW-0393">Immunoglobulin domain</keyword>
<keyword id="KW-0472">Membrane</keyword>
<keyword id="KW-0964">Secreted</keyword>
<comment type="function">
    <text evidence="4 6 7 8 9 10 11">Immunoglobulins, also known as antibodies, are membrane-bound or secreted glycoproteins produced by B lymphocytes. In the recognition phase of humoral immunity, the membrane-bound immunoglobulins serve as receptors which, upon binding of a specific antigen, trigger the clonal expansion and differentiation of B lymphocytes into immunoglobulins-secreting plasma cells. Secreted immunoglobulins mediate the effector phase of humoral immunity, which results in the elimination of bound antigens (PubMed:20176268, PubMed:22158414). The antigen binding site is formed by the variable domain of one heavy chain, together with that of its associated light chain. Thus, each immunoglobulin has two antigen binding sites with remarkable affinity for a particular antigen. The variable domains are assembled by a process called V-(D)-J rearrangement and can then be subjected to somatic hypermutations which, after exposure to antigen and selection, allow affinity maturation for a particular antigen (PubMed:17576170, PubMed:20176268). IgD is the major antigen receptor isotype on the surface of most peripheral B cells, where it is coexpressed with IgM. The membrane-bound IgD (mIgD) induces the phosphorylation of CD79A and CD79B by the Src family of protein tyrosine kinases. Soluble IgD (sIgD) concentration in serum is below those of IgG, IgA, and IgM but much higher than that of IgE. IgM and IgD molecules present on B cells have identical V regions and antigen-binding sites. After the antigen binds to the B cell receptor, the secreted form sIgD is shut off. IgD is a potent inducer of TNF, IL1B, and IL1RN. IgD also induces release of IL6, IL10, and LIF from peripheral blood mononuclear cells. Monocytes seem to be the main producers of cytokines in vitro in the presence of IgD (PubMed:10702483, PubMed:11282392, PubMed:16895553, PubMed:8774350).</text>
</comment>
<comment type="subunit">
    <text evidence="7 8 10">Immunoglobulins are composed of two identical heavy chains and two identical light chains; disulfide-linked (PubMed:20176268). An IgD molecule contains thus a delta heavy chain combined with either a kappa or a lambda light chains. Kappa light chains are found predominantly on the membrane IgD (mIgD) form and lambda on the secreted IgD (sIgD) form, this fact is poorly understood. Membrane-bound IgD molecules are non-covalently associated with a heterodimer of CD79A and CD79B (PubMed:11282392, PubMed:16895553).</text>
</comment>
<comment type="subcellular location">
    <subcellularLocation>
        <location evidence="7 10 11">Secreted</location>
    </subcellularLocation>
    <subcellularLocation>
        <location evidence="7 10 11">Cell membrane</location>
    </subcellularLocation>
</comment>
<comment type="caution">
    <text evidence="13">This sequence is an example of a full-length immunoglobulin delta heavy chain.</text>
</comment>
<organism>
    <name type="scientific">Homo sapiens</name>
    <name type="common">Human</name>
    <dbReference type="NCBI Taxonomy" id="9606"/>
    <lineage>
        <taxon>Eukaryota</taxon>
        <taxon>Metazoa</taxon>
        <taxon>Chordata</taxon>
        <taxon>Craniata</taxon>
        <taxon>Vertebrata</taxon>
        <taxon>Euteleostomi</taxon>
        <taxon>Mammalia</taxon>
        <taxon>Eutheria</taxon>
        <taxon>Euarchontoglires</taxon>
        <taxon>Primates</taxon>
        <taxon>Haplorrhini</taxon>
        <taxon>Catarrhini</taxon>
        <taxon>Hominidae</taxon>
        <taxon>Homo</taxon>
    </lineage>
</organism>
<evidence type="ECO:0000255" key="1">
    <source>
        <dbReference type="PROSITE-ProRule" id="PRU00114"/>
    </source>
</evidence>
<evidence type="ECO:0000256" key="2">
    <source>
        <dbReference type="SAM" id="MobiDB-lite"/>
    </source>
</evidence>
<evidence type="ECO:0000269" key="3">
    <source>
    </source>
</evidence>
<evidence type="ECO:0000269" key="4">
    <source>
    </source>
</evidence>
<evidence type="ECO:0000269" key="5">
    <source ref="2"/>
</evidence>
<evidence type="ECO:0000303" key="6">
    <source>
    </source>
</evidence>
<evidence type="ECO:0000303" key="7">
    <source>
    </source>
</evidence>
<evidence type="ECO:0000303" key="8">
    <source>
    </source>
</evidence>
<evidence type="ECO:0000303" key="9">
    <source>
    </source>
</evidence>
<evidence type="ECO:0000303" key="10">
    <source>
    </source>
</evidence>
<evidence type="ECO:0000303" key="11">
    <source>
    </source>
</evidence>
<evidence type="ECO:0000303" key="12">
    <source>
    </source>
</evidence>
<evidence type="ECO:0000305" key="13"/>
<evidence type="ECO:0000305" key="14">
    <source>
    </source>
</evidence>
<accession>P0DOX3</accession>
<dbReference type="PDB" id="1ZVO">
    <property type="method" value="X-ray"/>
    <property type="chains" value="C/D=1-512"/>
</dbReference>
<dbReference type="PDBsum" id="1ZVO"/>
<dbReference type="SMR" id="P0DOX3"/>
<dbReference type="iPTMnet" id="P0DOX3"/>
<dbReference type="SIGNOR" id="P0DOX3"/>
<dbReference type="EvolutionaryTrace" id="P0DOX3"/>
<dbReference type="Pharos" id="P0DOX3">
    <property type="development level" value="Tbio"/>
</dbReference>
<dbReference type="GO" id="GO:0005615">
    <property type="term" value="C:extracellular space"/>
    <property type="evidence" value="ECO:0000314"/>
    <property type="project" value="UniProtKB"/>
</dbReference>
<dbReference type="GO" id="GO:0019814">
    <property type="term" value="C:immunoglobulin complex"/>
    <property type="evidence" value="ECO:0007669"/>
    <property type="project" value="UniProtKB-KW"/>
</dbReference>
<dbReference type="GO" id="GO:0005886">
    <property type="term" value="C:plasma membrane"/>
    <property type="evidence" value="ECO:0007669"/>
    <property type="project" value="UniProtKB-SubCell"/>
</dbReference>
<dbReference type="GO" id="GO:0002250">
    <property type="term" value="P:adaptive immune response"/>
    <property type="evidence" value="ECO:0007669"/>
    <property type="project" value="UniProtKB-KW"/>
</dbReference>
<dbReference type="GO" id="GO:0042117">
    <property type="term" value="P:monocyte activation"/>
    <property type="evidence" value="ECO:0000314"/>
    <property type="project" value="UniProtKB"/>
</dbReference>
<dbReference type="GO" id="GO:0032731">
    <property type="term" value="P:positive regulation of interleukin-1 beta production"/>
    <property type="evidence" value="ECO:0000314"/>
    <property type="project" value="UniProtKB"/>
</dbReference>
<dbReference type="GO" id="GO:0032732">
    <property type="term" value="P:positive regulation of interleukin-1 production"/>
    <property type="evidence" value="ECO:0000314"/>
    <property type="project" value="UniProtKB"/>
</dbReference>
<dbReference type="GO" id="GO:0032760">
    <property type="term" value="P:positive regulation of tumor necrosis factor production"/>
    <property type="evidence" value="ECO:0000314"/>
    <property type="project" value="UniProtKB"/>
</dbReference>
<dbReference type="CDD" id="cd16092">
    <property type="entry name" value="IgC1_CH1_IgD"/>
    <property type="match status" value="1"/>
</dbReference>
<dbReference type="CDD" id="cd16084">
    <property type="entry name" value="IgC1_CH2_IgD"/>
    <property type="match status" value="1"/>
</dbReference>
<dbReference type="CDD" id="cd16094">
    <property type="entry name" value="IgC1_CH3_IgD"/>
    <property type="match status" value="1"/>
</dbReference>
<dbReference type="CDD" id="cd04981">
    <property type="entry name" value="IgV_H"/>
    <property type="match status" value="1"/>
</dbReference>
<dbReference type="FunFam" id="2.60.40.10:FF:002428">
    <property type="entry name" value="Immunoglobulin heavy constant delta"/>
    <property type="match status" value="1"/>
</dbReference>
<dbReference type="FunFam" id="2.60.40.10:FF:002802">
    <property type="entry name" value="Immunoglobulin heavy constant delta"/>
    <property type="match status" value="1"/>
</dbReference>
<dbReference type="FunFam" id="2.60.40.10:FF:001878">
    <property type="entry name" value="Immunoglobulin heavy variable 1-4"/>
    <property type="match status" value="1"/>
</dbReference>
<dbReference type="Gene3D" id="2.60.40.10">
    <property type="entry name" value="Immunoglobulins"/>
    <property type="match status" value="4"/>
</dbReference>
<dbReference type="InterPro" id="IPR007110">
    <property type="entry name" value="Ig-like_dom"/>
</dbReference>
<dbReference type="InterPro" id="IPR036179">
    <property type="entry name" value="Ig-like_dom_sf"/>
</dbReference>
<dbReference type="InterPro" id="IPR013783">
    <property type="entry name" value="Ig-like_fold"/>
</dbReference>
<dbReference type="InterPro" id="IPR003006">
    <property type="entry name" value="Ig/MHC_CS"/>
</dbReference>
<dbReference type="InterPro" id="IPR003597">
    <property type="entry name" value="Ig_C1-set"/>
</dbReference>
<dbReference type="InterPro" id="IPR003599">
    <property type="entry name" value="Ig_sub"/>
</dbReference>
<dbReference type="InterPro" id="IPR013106">
    <property type="entry name" value="Ig_V-set"/>
</dbReference>
<dbReference type="InterPro" id="IPR049351">
    <property type="entry name" value="IgD_del_linker"/>
</dbReference>
<dbReference type="InterPro" id="IPR050380">
    <property type="entry name" value="Immune_Resp_Modulators"/>
</dbReference>
<dbReference type="InterPro" id="IPR013151">
    <property type="entry name" value="Immunoglobulin_dom"/>
</dbReference>
<dbReference type="PANTHER" id="PTHR23411">
    <property type="entry name" value="TAPASIN"/>
    <property type="match status" value="1"/>
</dbReference>
<dbReference type="Pfam" id="PF07654">
    <property type="entry name" value="C1-set"/>
    <property type="match status" value="2"/>
</dbReference>
<dbReference type="Pfam" id="PF00047">
    <property type="entry name" value="ig"/>
    <property type="match status" value="1"/>
</dbReference>
<dbReference type="Pfam" id="PF20838">
    <property type="entry name" value="IgD_del_linker"/>
    <property type="match status" value="1"/>
</dbReference>
<dbReference type="Pfam" id="PF07686">
    <property type="entry name" value="V-set"/>
    <property type="match status" value="1"/>
</dbReference>
<dbReference type="SMART" id="SM00409">
    <property type="entry name" value="IG"/>
    <property type="match status" value="1"/>
</dbReference>
<dbReference type="SMART" id="SM00407">
    <property type="entry name" value="IGc1"/>
    <property type="match status" value="3"/>
</dbReference>
<dbReference type="SMART" id="SM00406">
    <property type="entry name" value="IGv"/>
    <property type="match status" value="1"/>
</dbReference>
<dbReference type="SUPFAM" id="SSF48726">
    <property type="entry name" value="Immunoglobulin"/>
    <property type="match status" value="4"/>
</dbReference>
<dbReference type="PROSITE" id="PS50835">
    <property type="entry name" value="IG_LIKE"/>
    <property type="match status" value="4"/>
</dbReference>
<dbReference type="PROSITE" id="PS00290">
    <property type="entry name" value="IG_MHC"/>
    <property type="match status" value="2"/>
</dbReference>
<name>IGD_HUMAN</name>
<reference key="1">
    <citation type="journal article" date="1982" name="Proc. Natl. Acad. Sci. U.S.A.">
        <title>Complete amino acid sequence of the delta heavy chain of human immunoglobulin D.</title>
        <authorList>
            <person name="Takahashi N."/>
            <person name="Tetaert D."/>
            <person name="Debuire B."/>
            <person name="Lin L.-C."/>
            <person name="Putnam F.W."/>
        </authorList>
    </citation>
    <scope>PROTEIN SEQUENCE</scope>
    <scope>DISULFIDE BOND</scope>
    <scope>GLYCOSYLATION AT ASN-354; ASN-445 AND ASN-496</scope>
</reference>
<reference key="2">
    <citation type="book" date="1982" name="Methods in protein sequence analysis">
        <title>Separation of hinge glycopeptides of human IgD by HPLC.</title>
        <editorList>
            <person name="Elzinga M."/>
        </editorList>
        <authorList>
            <person name="Takahashi N."/>
            <person name="Tetaert D."/>
            <person name="Putnam F.W."/>
        </authorList>
    </citation>
    <scope>GLYCOSYLATION AT SER-238; THR-255; THR-256; THR-260 AND THR-261</scope>
</reference>
<reference key="3">
    <citation type="journal article" date="1996" name="Immunology">
        <title>Immunoglobulin D enhances the release of tumor necrosis factor-alpha, and interleukin-1 beta as well as interleukin-1 receptor antagonist from human mononuclear cells.</title>
        <authorList>
            <person name="Drenth J.P."/>
            <person name="Goertz J."/>
            <person name="Daha M.R."/>
            <person name="van der Meer J.W."/>
        </authorList>
    </citation>
    <scope>FUNCTION</scope>
</reference>
<reference key="4">
    <citation type="journal article" date="2000" name="Clin. Diagn. Lab. Immunol.">
        <title>Immunoglobulin D: properties, measurement, and clinical relevance.</title>
        <authorList>
            <person name="Vladutiu A.O."/>
        </authorList>
    </citation>
    <scope>REVIEW ON FUNCTION</scope>
</reference>
<reference key="5">
    <citation type="journal article" date="2000" name="Mol. Immunol.">
        <title>Structural and functional properties of membrane and secreted IgD.</title>
        <authorList>
            <person name="Preud'homme J.L."/>
            <person name="Petit I."/>
            <person name="Barra A."/>
            <person name="Morel F."/>
            <person name="Lecron J.C."/>
            <person name="Lelievre E."/>
        </authorList>
    </citation>
    <scope>REVIEW ON FUNCTION; SUBCELLULAR LOCATION AND SUBUNIT</scope>
</reference>
<reference key="6">
    <citation type="journal article" date="2006" name="Immunology">
        <title>The riddle of the dual expression of IgM and IgD.</title>
        <authorList>
            <person name="Geisberger R."/>
            <person name="Lamers M."/>
            <person name="Achatz G."/>
        </authorList>
    </citation>
    <scope>REVIEW</scope>
</reference>
<reference key="7">
    <citation type="journal article" date="2007" name="Annu. Rev. Genet.">
        <title>Immunoglobulin somatic hypermutation.</title>
        <authorList>
            <person name="Teng G."/>
            <person name="Papavasiliou F.N."/>
        </authorList>
    </citation>
    <scope>REVIEW ON SOMATIC HYPERMUTATION</scope>
</reference>
<reference key="8">
    <citation type="journal article" date="2010" name="J. Allergy Clin. Immunol.">
        <title>Structure and function of immunoglobulins.</title>
        <authorList>
            <person name="Schroeder H.W. Jr."/>
            <person name="Cavacini L."/>
        </authorList>
    </citation>
    <scope>REVIEW ON IMMUNOGLOBULINS</scope>
</reference>
<reference key="9">
    <citation type="journal article" date="2012" name="Nat. Rev. Immunol.">
        <title>Molecular programming of B cell memory.</title>
        <authorList>
            <person name="McHeyzer-Williams M."/>
            <person name="Okitsu S."/>
            <person name="Wang N."/>
            <person name="McHeyzer-Williams L."/>
        </authorList>
    </citation>
    <scope>REVIEW ON FUNCTION</scope>
</reference>
<protein>
    <recommendedName>
        <fullName evidence="13">Immunoglobulin delta heavy chain</fullName>
    </recommendedName>
    <alternativeName>
        <fullName evidence="14">Immunoglobulin delta heavy chain WAH</fullName>
    </alternativeName>
</protein>
<proteinExistence type="evidence at protein level"/>
<sequence>RLQLQESGPGLVKPSETLSLTCIVSGGPIRRTGYYWGWIRQPPGKGLEWIGGVYYTGSIYYNPSLRGRVTISVDTSRNQFSLNLRSMSAADTAMYYCARGNPPPYYDIGTGSDDGIDVWGQGTTVHVSSAPTKAPDVFPIISGCRHPKDNSPVVLACLITGYHPTSVTVTWYMGTQSQPQRTFPEIQRRDSYYMTSSQLSTPLQQWRQGEYKCVVQHTASKSKKEIFRWPESPKAQASSVPTAQPQAEGSLAKATTAPATTRNTGRGGEEKKKEKEKEEQEERETKTPECPSHTQPLGVYLLTPAVQDLWLRDKATFTCFVVGSDLKDAHLTWEVAGKVPTGGVEEGLLERHSNGSQSQHSRLTLPRSLWNAGTSVTCTLNHPSLPPQRLMALREPAAQAPVKLSLNLLASSDPPEAASWLLCEVSGFSPPNILLMWLEDQREVNTSGFAPARPPPQPGSTTFWAWSVLRVPAPPSPQPATYTCVVSHEDSRTLLNASRSLEVSYVTDHGPM</sequence>
<feature type="chain" id="PRO_0000439284" description="Immunoglobulin delta heavy chain">
    <location>
        <begin position="1"/>
        <end position="512"/>
    </location>
</feature>
<feature type="domain" description="Ig-like 1" evidence="1">
    <location>
        <begin position="1"/>
        <end position="97"/>
    </location>
</feature>
<feature type="domain" description="Ig-like 2" evidence="1">
    <location>
        <begin position="135"/>
        <end position="227"/>
    </location>
</feature>
<feature type="domain" description="Ig-like 3" evidence="1">
    <location>
        <begin position="304"/>
        <end position="392"/>
    </location>
</feature>
<feature type="domain" description="Ig-like 4" evidence="1">
    <location>
        <begin position="396"/>
        <end position="502"/>
    </location>
</feature>
<feature type="region of interest" description="Variable (V) domain, involved in antigen recognition" evidence="14">
    <location>
        <begin position="1"/>
        <end position="129"/>
    </location>
</feature>
<feature type="region of interest" description="Constant (C) domain" evidence="14">
    <location>
        <begin position="130"/>
        <end position="512"/>
    </location>
</feature>
<feature type="region of interest" description="Disordered" evidence="2">
    <location>
        <begin position="225"/>
        <end position="296"/>
    </location>
</feature>
<feature type="compositionally biased region" description="Polar residues" evidence="2">
    <location>
        <begin position="235"/>
        <end position="247"/>
    </location>
</feature>
<feature type="compositionally biased region" description="Basic and acidic residues" evidence="2">
    <location>
        <begin position="267"/>
        <end position="287"/>
    </location>
</feature>
<feature type="glycosylation site" description="O-linked (GalNAc...) serine" evidence="5">
    <location>
        <position position="238"/>
    </location>
</feature>
<feature type="glycosylation site" description="O-linked (GalNAc...) threonine" evidence="5">
    <location>
        <position position="255"/>
    </location>
</feature>
<feature type="glycosylation site" description="O-linked (GalNAc...) threonine" evidence="5">
    <location>
        <position position="256"/>
    </location>
</feature>
<feature type="glycosylation site" description="O-linked (GalNAc...) threonine" evidence="5">
    <location>
        <position position="260"/>
    </location>
</feature>
<feature type="glycosylation site" description="O-linked (GalNAc...) threonine" evidence="5">
    <location>
        <position position="261"/>
    </location>
</feature>
<feature type="glycosylation site" description="N-linked (GlcNAc...) asparagine" evidence="3">
    <location>
        <position position="354"/>
    </location>
</feature>
<feature type="glycosylation site" description="N-linked (GlcNAc...) asparagine" evidence="3">
    <location>
        <position position="445"/>
    </location>
</feature>
<feature type="glycosylation site" description="N-linked (GlcNAc...) asparagine" evidence="3">
    <location>
        <position position="496"/>
    </location>
</feature>
<feature type="disulfide bond" evidence="1 12">
    <location>
        <begin position="22"/>
        <end position="97"/>
    </location>
</feature>
<feature type="disulfide bond" description="Interchain (with light chain)" evidence="1 12">
    <location>
        <position position="144"/>
    </location>
</feature>
<feature type="disulfide bond" evidence="1 12">
    <location>
        <begin position="157"/>
        <end position="213"/>
    </location>
</feature>
<feature type="disulfide bond" description="Interchain (with heavy chain)" evidence="1 12">
    <location>
        <position position="290"/>
    </location>
</feature>
<feature type="disulfide bond" evidence="1 12">
    <location>
        <begin position="319"/>
        <end position="378"/>
    </location>
</feature>
<feature type="disulfide bond" evidence="1 12">
    <location>
        <begin position="423"/>
        <end position="484"/>
    </location>
</feature>